<comment type="function">
    <text evidence="1">Late protein which is a part of a large complex required for early virion morphogenesis. This complex participates in the formation of virosomes and the incorporation of virosomal contents into nascent immature virions. Plays a role in DNA packaging during immature virions (IV) formation.</text>
</comment>
<comment type="subunit">
    <text evidence="1">Homodimer. Part of a complex composed of the kinase OPG054, OPG092, OPG114, OPG115, OPG142 and OPG157. Interacts with OPG175.</text>
</comment>
<comment type="subcellular location">
    <subcellularLocation>
        <location evidence="1">Virion</location>
    </subcellularLocation>
    <subcellularLocation>
        <location evidence="1">Host cytoplasm</location>
    </subcellularLocation>
    <text evidence="1">Localizes in cytoplasmic virus factories. Probably located in between the core and the virion membrane.</text>
</comment>
<comment type="induction">
    <text>Expressed in the late phase of the viral replicative cycle.</text>
</comment>
<comment type="similarity">
    <text evidence="2">Belongs to the orthopoxvirus OPG100 family.</text>
</comment>
<reference key="1">
    <citation type="journal article" date="1990" name="Virology">
        <title>The complete DNA sequence of vaccinia virus.</title>
        <authorList>
            <person name="Goebel S.J."/>
            <person name="Johnson G.P."/>
            <person name="Perkus M.E."/>
            <person name="Davis S.W."/>
            <person name="Winslow J.P."/>
            <person name="Paoletti E."/>
        </authorList>
    </citation>
    <scope>NUCLEOTIDE SEQUENCE [LARGE SCALE GENOMIC DNA]</scope>
</reference>
<reference key="2">
    <citation type="journal article" date="1990" name="Virology">
        <title>Appendix to 'The complete DNA sequence of vaccinia virus'.</title>
        <authorList>
            <person name="Goebel S.J."/>
            <person name="Johnson G.P."/>
            <person name="Perkus M.E."/>
            <person name="Davis S.W."/>
            <person name="Winslow J.P."/>
            <person name="Paoletti E."/>
        </authorList>
    </citation>
    <scope>NUCLEOTIDE SEQUENCE [LARGE SCALE GENOMIC DNA]</scope>
</reference>
<organism>
    <name type="scientific">Vaccinia virus (strain Copenhagen)</name>
    <name type="common">VACV</name>
    <dbReference type="NCBI Taxonomy" id="10249"/>
    <lineage>
        <taxon>Viruses</taxon>
        <taxon>Varidnaviria</taxon>
        <taxon>Bamfordvirae</taxon>
        <taxon>Nucleocytoviricota</taxon>
        <taxon>Pokkesviricetes</taxon>
        <taxon>Chitovirales</taxon>
        <taxon>Poxviridae</taxon>
        <taxon>Chordopoxvirinae</taxon>
        <taxon>Orthopoxvirus</taxon>
        <taxon>Vaccinia virus</taxon>
    </lineage>
</organism>
<gene>
    <name type="primary">OPG100</name>
    <name type="ORF">J1R</name>
</gene>
<accession>P21032</accession>
<protein>
    <recommendedName>
        <fullName>Virion assembly protein OPG100</fullName>
    </recommendedName>
    <alternativeName>
        <fullName>Protein J1</fullName>
    </alternativeName>
</protein>
<proteinExistence type="evidence at transcript level"/>
<organismHost>
    <name type="scientific">Homo sapiens</name>
    <name type="common">Human</name>
    <dbReference type="NCBI Taxonomy" id="9606"/>
</organismHost>
<dbReference type="EMBL" id="M35027">
    <property type="protein sequence ID" value="AAA48081.1"/>
    <property type="molecule type" value="Genomic_DNA"/>
</dbReference>
<dbReference type="PIR" id="D42513">
    <property type="entry name" value="D42513"/>
</dbReference>
<dbReference type="Proteomes" id="UP000008269">
    <property type="component" value="Segment"/>
</dbReference>
<dbReference type="GO" id="GO:0030430">
    <property type="term" value="C:host cell cytoplasm"/>
    <property type="evidence" value="ECO:0007669"/>
    <property type="project" value="UniProtKB-SubCell"/>
</dbReference>
<dbReference type="GO" id="GO:0044423">
    <property type="term" value="C:virion component"/>
    <property type="evidence" value="ECO:0007669"/>
    <property type="project" value="UniProtKB-KW"/>
</dbReference>
<dbReference type="InterPro" id="IPR005006">
    <property type="entry name" value="Poxvirus_J1"/>
</dbReference>
<dbReference type="Pfam" id="PF03338">
    <property type="entry name" value="Pox_J1"/>
    <property type="match status" value="1"/>
</dbReference>
<keyword id="KW-1035">Host cytoplasm</keyword>
<keyword id="KW-0426">Late protein</keyword>
<keyword id="KW-1185">Reference proteome</keyword>
<keyword id="KW-0946">Virion</keyword>
<evidence type="ECO:0000250" key="1">
    <source>
        <dbReference type="UniProtKB" id="P07616"/>
    </source>
</evidence>
<evidence type="ECO:0000305" key="2"/>
<name>PG100_VACCC</name>
<sequence length="153" mass="17876">MDHNQYLLTMFFADDDSFFKYLASQDDESSLSDILQITQYLDFLLLLLIQSKNKLEAVGHCYESLSEEYRQLTKFTDSQDFKKLFNKVPIVTDGRVKLNKGYLFDFVISLMRFKKESSLATTAIDPIRYIDPRRDIAFSNVMDILKSNKVNNN</sequence>
<feature type="chain" id="PRO_0000099587" description="Virion assembly protein OPG100">
    <location>
        <begin position="1"/>
        <end position="153"/>
    </location>
</feature>